<accession>Q647G9</accession>
<accession>Q5I1E9</accession>
<accession>Q5I6T1</accession>
<accession>Q8W251</accession>
<accession>Q9SQG5</accession>
<name>CONG_ARAHY</name>
<feature type="signal peptide" evidence="1">
    <location>
        <begin position="1"/>
        <end position="21"/>
    </location>
</feature>
<feature type="chain" id="PRO_0000272966" description="Conglutin" evidence="1">
    <location>
        <begin position="22"/>
        <end position="145"/>
    </location>
</feature>
<feature type="disulfide bond" evidence="4">
    <location>
        <begin position="35"/>
        <end position="92"/>
    </location>
</feature>
<feature type="disulfide bond" evidence="4">
    <location>
        <begin position="47"/>
        <end position="79"/>
    </location>
</feature>
<feature type="disulfide bond" evidence="4">
    <location>
        <begin position="80"/>
        <end position="128"/>
    </location>
</feature>
<feature type="disulfide bond" evidence="4">
    <location>
        <begin position="94"/>
        <end position="136"/>
    </location>
</feature>
<feature type="disulfide bond" evidence="4">
    <location>
        <begin position="105"/>
        <end position="145"/>
    </location>
</feature>
<feature type="sequence conflict" description="In Ref. 3; AAD56337." evidence="7" ref="3">
    <original>R</original>
    <variation>G</variation>
    <location>
        <position position="41"/>
    </location>
</feature>
<feature type="sequence conflict" description="In Ref. 3; AAD56337." evidence="7" ref="3">
    <original>DIR</original>
    <variation>NFG</variation>
    <location>
        <begin position="66"/>
        <end position="68"/>
    </location>
</feature>
<feature type="sequence conflict" description="In Ref. 1; AAW56068 and 2; AAL37561." evidence="7" ref="1 2">
    <original>NE</original>
    <variation>DQ</variation>
    <location>
        <begin position="84"/>
        <end position="85"/>
    </location>
</feature>
<feature type="sequence conflict" description="In Ref. 1; AAW56068 and 2; AAL37561." evidence="7" ref="1 2">
    <original>Q</original>
    <variation>E</variation>
    <location>
        <position position="90"/>
    </location>
</feature>
<feature type="sequence conflict" description="In Ref. 5; AAW34231." evidence="7" ref="5">
    <original>R</original>
    <variation>G</variation>
    <location>
        <position position="91"/>
    </location>
</feature>
<feature type="sequence conflict" description="In Ref. 3; AAD56337." evidence="7" ref="3">
    <original>R</original>
    <variation>G</variation>
    <location>
        <position position="107"/>
    </location>
</feature>
<feature type="sequence conflict" description="In Ref. 3; AAD56337." evidence="7" ref="3">
    <original>Q</original>
    <variation>H</variation>
    <location>
        <position position="116"/>
    </location>
</feature>
<feature type="sequence conflict" description="In Ref. 5; AAW34231." evidence="7" ref="5">
    <original>N</original>
    <variation>S</variation>
    <location>
        <position position="123"/>
    </location>
</feature>
<feature type="sequence conflict" description="In Ref. 3; AAD56337." evidence="7" ref="3">
    <original>R</original>
    <variation>G</variation>
    <location>
        <position position="131"/>
    </location>
</feature>
<feature type="helix" evidence="13">
    <location>
        <begin position="35"/>
        <end position="41"/>
    </location>
</feature>
<feature type="helix" evidence="13">
    <location>
        <begin position="45"/>
        <end position="55"/>
    </location>
</feature>
<feature type="strand" evidence="12">
    <location>
        <begin position="57"/>
        <end position="61"/>
    </location>
</feature>
<feature type="helix" evidence="13">
    <location>
        <begin position="75"/>
        <end position="84"/>
    </location>
</feature>
<feature type="strand" evidence="13">
    <location>
        <begin position="85"/>
        <end position="87"/>
    </location>
</feature>
<feature type="strand" evidence="13">
    <location>
        <begin position="89"/>
        <end position="92"/>
    </location>
</feature>
<feature type="helix" evidence="13">
    <location>
        <begin position="93"/>
        <end position="102"/>
    </location>
</feature>
<feature type="helix" evidence="13">
    <location>
        <begin position="103"/>
        <end position="107"/>
    </location>
</feature>
<feature type="helix" evidence="13">
    <location>
        <begin position="111"/>
        <end position="127"/>
    </location>
</feature>
<feature type="helix" evidence="13">
    <location>
        <begin position="138"/>
        <end position="143"/>
    </location>
</feature>
<keyword id="KW-0002">3D-structure</keyword>
<keyword id="KW-0020">Allergen</keyword>
<keyword id="KW-0903">Direct protein sequencing</keyword>
<keyword id="KW-1015">Disulfide bond</keyword>
<keyword id="KW-0389">IgE-binding protein</keyword>
<keyword id="KW-0708">Seed storage protein</keyword>
<keyword id="KW-0732">Signal</keyword>
<keyword id="KW-0758">Storage protein</keyword>
<comment type="tissue specificity">
    <text evidence="3">Expressed in seeds. Not expressed in roots, pegs (budding ovaries) or leaves.</text>
</comment>
<comment type="developmental stage">
    <text evidence="3">Expressed in the later, cell expansion, stages of seed development.</text>
</comment>
<comment type="induction">
    <text evidence="6">Repressed by water stress.</text>
</comment>
<comment type="mass spectrometry" mass="17479.0" method="Electrospray" evidence="6"/>
<comment type="allergen">
    <text evidence="2 4">Causes an allergic reaction in human. Binds to IgE.</text>
</comment>
<comment type="similarity">
    <text evidence="1">Belongs to the 2S seed storage albumins family.</text>
</comment>
<sequence length="145" mass="16920">MAKSTILVALLALVLVAHASAMRRERGRQGDSSSCERQVDRVNLKPCEQHIMQRIMGEQEQYDSYDIRSTRSSDQQQRCCDELNEMENTQRCMCEALQQIMENQCDRLQDRQMVQQFKRELMNLPQQCNFRAPQRCDLDVSGGRC</sequence>
<proteinExistence type="evidence at protein level"/>
<evidence type="ECO:0000255" key="1"/>
<evidence type="ECO:0000269" key="2">
    <source>
    </source>
</evidence>
<evidence type="ECO:0000269" key="3">
    <source>
    </source>
</evidence>
<evidence type="ECO:0000269" key="4">
    <source>
    </source>
</evidence>
<evidence type="ECO:0000269" key="5">
    <source ref="1"/>
</evidence>
<evidence type="ECO:0000269" key="6">
    <source ref="4"/>
</evidence>
<evidence type="ECO:0000305" key="7"/>
<evidence type="ECO:0000312" key="8">
    <source>
        <dbReference type="EMBL" id="AAD56337.1"/>
    </source>
</evidence>
<evidence type="ECO:0000312" key="9">
    <source>
        <dbReference type="EMBL" id="AAL37561.1"/>
    </source>
</evidence>
<evidence type="ECO:0000312" key="10">
    <source>
        <dbReference type="EMBL" id="AAU21495.1"/>
    </source>
</evidence>
<evidence type="ECO:0000312" key="11">
    <source>
        <dbReference type="EMBL" id="AAW34231.1"/>
    </source>
</evidence>
<evidence type="ECO:0007829" key="12">
    <source>
        <dbReference type="PDB" id="1W2Q"/>
    </source>
</evidence>
<evidence type="ECO:0007829" key="13">
    <source>
        <dbReference type="PDB" id="8SJ4"/>
    </source>
</evidence>
<organism>
    <name type="scientific">Arachis hypogaea</name>
    <name type="common">Peanut</name>
    <dbReference type="NCBI Taxonomy" id="3818"/>
    <lineage>
        <taxon>Eukaryota</taxon>
        <taxon>Viridiplantae</taxon>
        <taxon>Streptophyta</taxon>
        <taxon>Embryophyta</taxon>
        <taxon>Tracheophyta</taxon>
        <taxon>Spermatophyta</taxon>
        <taxon>Magnoliopsida</taxon>
        <taxon>eudicotyledons</taxon>
        <taxon>Gunneridae</taxon>
        <taxon>Pentapetalae</taxon>
        <taxon>rosids</taxon>
        <taxon>fabids</taxon>
        <taxon>Fabales</taxon>
        <taxon>Fabaceae</taxon>
        <taxon>Papilionoideae</taxon>
        <taxon>50 kb inversion clade</taxon>
        <taxon>dalbergioids sensu lato</taxon>
        <taxon>Dalbergieae</taxon>
        <taxon>Pterocarpus clade</taxon>
        <taxon>Arachis</taxon>
    </lineage>
</organism>
<protein>
    <recommendedName>
        <fullName>Conglutin</fullName>
    </recommendedName>
    <allergenName>Ara h 6</allergenName>
</protein>
<reference evidence="10" key="1">
    <citation type="journal article" date="2005" name="Plant Sci.">
        <title>Isolation of peanut genes encoding arachins and conglutins by expressed sequence tags.</title>
        <authorList>
            <person name="Yan Y.-S."/>
            <person name="Lin X.-D."/>
            <person name="Zhang Y.-S."/>
            <person name="Wang L."/>
            <person name="Wu K."/>
            <person name="Huang S.-Z."/>
        </authorList>
        <dbReference type="AGRICOLA" id="IND43739496"/>
    </citation>
    <scope>NUCLEOTIDE SEQUENCE [MRNA]</scope>
    <source>
        <strain evidence="5">cv. Shanyou 523</strain>
        <tissue evidence="5">Cotyledon</tissue>
    </source>
</reference>
<reference evidence="7 9" key="2">
    <citation type="journal article" date="2002" name="Theor. Appl. Genet.">
        <title>Seed-specific, developmentally regulated genes of peanut.</title>
        <authorList>
            <person name="Paik-Ro O.G."/>
            <person name="Seib J.C."/>
            <person name="Smith R.L."/>
        </authorList>
    </citation>
    <scope>NUCLEOTIDE SEQUENCE [MRNA] OF 2-145</scope>
    <scope>TISSUE SPECIFICITY</scope>
    <scope>DEVELOPMENTAL STAGE</scope>
    <source>
        <strain evidence="3">cv. FL435</strain>
        <tissue evidence="3">Seed</tissue>
    </source>
</reference>
<reference evidence="7 8" key="3">
    <citation type="journal article" date="1999" name="Int. Arch. Allergy Immunol.">
        <title>Selective cloning of peanut allergens, including profilin and 2S albumins, by phage display technology.</title>
        <authorList>
            <person name="Kleber-Janke T."/>
            <person name="Crameri R."/>
            <person name="Appenzeller U."/>
            <person name="Schlaak M."/>
            <person name="Becker W.-M."/>
        </authorList>
    </citation>
    <scope>NUCLEOTIDE SEQUENCE [MRNA] OF 17-145</scope>
    <scope>ALLERGEN</scope>
    <source>
        <strain evidence="2">cv. Virginia</strain>
        <tissue evidence="8">Seed</tissue>
    </source>
</reference>
<reference evidence="7 11" key="4">
    <citation type="submission" date="2007-03" db="UniProtKB">
        <title>Suppression of seed storage proteins upon water stress in Arachis hypogea var. M-13 seeds.</title>
        <authorList>
            <person name="Katam R."/>
            <person name="Vasanthaiah H.K.N."/>
            <person name="Basha S.M."/>
            <person name="McClung S."/>
        </authorList>
    </citation>
    <scope>PROTEIN SEQUENCE OF 22-145</scope>
    <scope>REPRESSION BY WATER STRESS</scope>
    <scope>MASS SPECTROMETRY</scope>
    <source>
        <strain evidence="6">cv. M13</strain>
        <tissue evidence="6">Seed</tissue>
    </source>
</reference>
<reference evidence="7 11" key="5">
    <citation type="submission" date="2004-11" db="EMBL/GenBank/DDBJ databases">
        <title>Epitope mapping of Ara h 6.</title>
        <authorList>
            <person name="Schocker F."/>
            <person name="Suhr M."/>
            <person name="Becker W.-M."/>
        </authorList>
    </citation>
    <scope>NUCLEOTIDE SEQUENCE [GENOMIC DNA] OF 22-145</scope>
</reference>
<reference key="6">
    <citation type="journal article" date="2006" name="Biochem. J.">
        <title>Structure and stability of 2S albumin-type peanut allergens: implications for the severity of peanut allergic reactions.</title>
        <authorList>
            <person name="Lehmann K."/>
            <person name="Schweimer K."/>
            <person name="Reese G."/>
            <person name="Randow S."/>
            <person name="Suhr M."/>
            <person name="Becker W.-M."/>
            <person name="Vieths S."/>
            <person name="Roesch P."/>
        </authorList>
    </citation>
    <scope>STRUCTURE BY NMR OF 22-145</scope>
    <scope>PARTIAL PROTEIN SEQUENCE</scope>
    <scope>ALLERGEN</scope>
    <scope>DISULFIDE BONDS</scope>
    <source>
        <tissue>Seed</tissue>
    </source>
</reference>
<dbReference type="EMBL" id="AY722690">
    <property type="protein sequence ID" value="AAU21495.1"/>
    <property type="molecule type" value="mRNA"/>
</dbReference>
<dbReference type="EMBL" id="AY848699">
    <property type="protein sequence ID" value="AAW56068.1"/>
    <property type="molecule type" value="mRNA"/>
</dbReference>
<dbReference type="EMBL" id="AY849314">
    <property type="protein sequence ID" value="AAW32558.1"/>
    <property type="molecule type" value="mRNA"/>
</dbReference>
<dbReference type="EMBL" id="AF366561">
    <property type="protein sequence ID" value="AAL37561.1"/>
    <property type="molecule type" value="mRNA"/>
</dbReference>
<dbReference type="EMBL" id="AF092846">
    <property type="protein sequence ID" value="AAD56337.1"/>
    <property type="molecule type" value="mRNA"/>
</dbReference>
<dbReference type="EMBL" id="AY871100">
    <property type="protein sequence ID" value="AAW34231.1"/>
    <property type="molecule type" value="Genomic_DNA"/>
</dbReference>
<dbReference type="RefSeq" id="NP_001363141.1">
    <property type="nucleotide sequence ID" value="NM_001376212.1"/>
</dbReference>
<dbReference type="RefSeq" id="XP_025672152.1">
    <property type="nucleotide sequence ID" value="XM_025816367.3"/>
</dbReference>
<dbReference type="PDB" id="1W2Q">
    <property type="method" value="NMR"/>
    <property type="chains" value="A=22-145"/>
</dbReference>
<dbReference type="PDB" id="8SI1">
    <property type="method" value="X-ray"/>
    <property type="resolution" value="3.20 A"/>
    <property type="chains" value="E/F/G=34-145"/>
</dbReference>
<dbReference type="PDB" id="8SJ4">
    <property type="method" value="X-ray"/>
    <property type="resolution" value="2.67 A"/>
    <property type="chains" value="A=34-145"/>
</dbReference>
<dbReference type="PDB" id="8SJA">
    <property type="method" value="X-ray"/>
    <property type="resolution" value="2.68 A"/>
    <property type="chains" value="G/I=34-145"/>
</dbReference>
<dbReference type="PDBsum" id="1W2Q"/>
<dbReference type="PDBsum" id="8SI1"/>
<dbReference type="PDBsum" id="8SJ4"/>
<dbReference type="PDBsum" id="8SJA"/>
<dbReference type="SMR" id="Q647G9"/>
<dbReference type="Allergome" id="3098">
    <property type="allergen name" value="Ara h 6.0101"/>
</dbReference>
<dbReference type="Allergome" id="55">
    <property type="allergen name" value="Ara h 6"/>
</dbReference>
<dbReference type="ABCD" id="Q647G9">
    <property type="antibodies" value="3 sequenced antibodies"/>
</dbReference>
<dbReference type="EnsemblPlants" id="arahy.Tifrunner.gnm2.ann2.Ah18g135400.1">
    <property type="protein sequence ID" value="arahy.Tifrunner.gnm2.ann2.Ah18g135400.1-CDS-1"/>
    <property type="gene ID" value="arahy.Tifrunner.gnm2.ann2.Ah18g135400"/>
</dbReference>
<dbReference type="EnsemblPlants" id="arahy.Tifrunner.gnm2.ann2.Ah18g135600.1">
    <property type="protein sequence ID" value="arahy.Tifrunner.gnm2.ann2.Ah18g135600.1-CDS-1"/>
    <property type="gene ID" value="arahy.Tifrunner.gnm2.ann2.Ah18g135600"/>
</dbReference>
<dbReference type="GeneID" id="112771111"/>
<dbReference type="GeneID" id="112771582"/>
<dbReference type="Gramene" id="arahy.Tifrunner.gnm2.ann2.Ah18g135400.1">
    <property type="protein sequence ID" value="arahy.Tifrunner.gnm2.ann2.Ah18g135400.1-CDS-1"/>
    <property type="gene ID" value="arahy.Tifrunner.gnm2.ann2.Ah18g135400"/>
</dbReference>
<dbReference type="Gramene" id="arahy.Tifrunner.gnm2.ann2.Ah18g135600.1">
    <property type="protein sequence ID" value="arahy.Tifrunner.gnm2.ann2.Ah18g135600.1-CDS-1"/>
    <property type="gene ID" value="arahy.Tifrunner.gnm2.ann2.Ah18g135600"/>
</dbReference>
<dbReference type="OrthoDB" id="1424936at2759"/>
<dbReference type="EvolutionaryTrace" id="Q647G9"/>
<dbReference type="GO" id="GO:0019863">
    <property type="term" value="F:IgE binding"/>
    <property type="evidence" value="ECO:0007669"/>
    <property type="project" value="UniProtKB-KW"/>
</dbReference>
<dbReference type="GO" id="GO:0045735">
    <property type="term" value="F:nutrient reservoir activity"/>
    <property type="evidence" value="ECO:0007669"/>
    <property type="project" value="UniProtKB-KW"/>
</dbReference>
<dbReference type="DisProt" id="DP00942"/>
<dbReference type="Gene3D" id="1.10.110.10">
    <property type="entry name" value="Plant lipid-transfer and hydrophobic proteins"/>
    <property type="match status" value="1"/>
</dbReference>
<dbReference type="InterPro" id="IPR036312">
    <property type="entry name" value="Bifun_inhib/LTP/seed_sf"/>
</dbReference>
<dbReference type="InterPro" id="IPR016140">
    <property type="entry name" value="Bifunc_inhib/LTP/seed_store"/>
</dbReference>
<dbReference type="InterPro" id="IPR000617">
    <property type="entry name" value="Napin/2SS/CON"/>
</dbReference>
<dbReference type="PANTHER" id="PTHR35496">
    <property type="entry name" value="2S SEED STORAGE PROTEIN 1-RELATED"/>
    <property type="match status" value="1"/>
</dbReference>
<dbReference type="PANTHER" id="PTHR35496:SF20">
    <property type="entry name" value="2S SEED STORAGE PROTEIN 1-RELATED"/>
    <property type="match status" value="1"/>
</dbReference>
<dbReference type="Pfam" id="PF00234">
    <property type="entry name" value="Tryp_alpha_amyl"/>
    <property type="match status" value="1"/>
</dbReference>
<dbReference type="SMART" id="SM00499">
    <property type="entry name" value="AAI"/>
    <property type="match status" value="1"/>
</dbReference>
<dbReference type="SUPFAM" id="SSF47699">
    <property type="entry name" value="Bifunctional inhibitor/lipid-transfer protein/seed storage 2S albumin"/>
    <property type="match status" value="1"/>
</dbReference>